<organism>
    <name type="scientific">Listeria innocua serovar 6a (strain ATCC BAA-680 / CLIP 11262)</name>
    <dbReference type="NCBI Taxonomy" id="272626"/>
    <lineage>
        <taxon>Bacteria</taxon>
        <taxon>Bacillati</taxon>
        <taxon>Bacillota</taxon>
        <taxon>Bacilli</taxon>
        <taxon>Bacillales</taxon>
        <taxon>Listeriaceae</taxon>
        <taxon>Listeria</taxon>
    </lineage>
</organism>
<gene>
    <name evidence="1" type="primary">hslV</name>
    <name type="synonym">clpQ</name>
    <name type="ordered locus">lin1317</name>
</gene>
<proteinExistence type="inferred from homology"/>
<evidence type="ECO:0000255" key="1">
    <source>
        <dbReference type="HAMAP-Rule" id="MF_00248"/>
    </source>
</evidence>
<feature type="chain" id="PRO_0000148120" description="ATP-dependent protease subunit HslV">
    <location>
        <begin position="1"/>
        <end position="179"/>
    </location>
</feature>
<feature type="active site" evidence="1">
    <location>
        <position position="6"/>
    </location>
</feature>
<feature type="binding site" evidence="1">
    <location>
        <position position="164"/>
    </location>
    <ligand>
        <name>Na(+)</name>
        <dbReference type="ChEBI" id="CHEBI:29101"/>
    </ligand>
</feature>
<feature type="binding site" evidence="1">
    <location>
        <position position="167"/>
    </location>
    <ligand>
        <name>Na(+)</name>
        <dbReference type="ChEBI" id="CHEBI:29101"/>
    </ligand>
</feature>
<feature type="binding site" evidence="1">
    <location>
        <position position="170"/>
    </location>
    <ligand>
        <name>Na(+)</name>
        <dbReference type="ChEBI" id="CHEBI:29101"/>
    </ligand>
</feature>
<sequence length="179" mass="19390">MELHATTIFAVQHDGKAAMAGDGQVTLGESVVMKHTAKKVRRLFHDKVIAGFAGSVADAFTLFEKFEAKLNEYNGNLERAAVELAQQWRSDSVLRKLEAMLIVMDKDTLLLVSGTGEVIEPDDGILAIGSGGNYALAAGRALKRHNGGQMEAKDIARHALEIASEICVFTNDHITVEEL</sequence>
<keyword id="KW-0021">Allosteric enzyme</keyword>
<keyword id="KW-0963">Cytoplasm</keyword>
<keyword id="KW-0378">Hydrolase</keyword>
<keyword id="KW-0479">Metal-binding</keyword>
<keyword id="KW-0645">Protease</keyword>
<keyword id="KW-0915">Sodium</keyword>
<keyword id="KW-0888">Threonine protease</keyword>
<comment type="function">
    <text evidence="1">Protease subunit of a proteasome-like degradation complex believed to be a general protein degrading machinery.</text>
</comment>
<comment type="catalytic activity">
    <reaction evidence="1">
        <text>ATP-dependent cleavage of peptide bonds with broad specificity.</text>
        <dbReference type="EC" id="3.4.25.2"/>
    </reaction>
</comment>
<comment type="activity regulation">
    <text evidence="1">Allosterically activated by HslU binding.</text>
</comment>
<comment type="subunit">
    <text evidence="1">A double ring-shaped homohexamer of HslV is capped on each side by a ring-shaped HslU homohexamer. The assembly of the HslU/HslV complex is dependent on binding of ATP.</text>
</comment>
<comment type="subcellular location">
    <subcellularLocation>
        <location evidence="1">Cytoplasm</location>
    </subcellularLocation>
</comment>
<comment type="similarity">
    <text evidence="1">Belongs to the peptidase T1B family. HslV subfamily.</text>
</comment>
<name>HSLV_LISIN</name>
<reference key="1">
    <citation type="journal article" date="2001" name="Science">
        <title>Comparative genomics of Listeria species.</title>
        <authorList>
            <person name="Glaser P."/>
            <person name="Frangeul L."/>
            <person name="Buchrieser C."/>
            <person name="Rusniok C."/>
            <person name="Amend A."/>
            <person name="Baquero F."/>
            <person name="Berche P."/>
            <person name="Bloecker H."/>
            <person name="Brandt P."/>
            <person name="Chakraborty T."/>
            <person name="Charbit A."/>
            <person name="Chetouani F."/>
            <person name="Couve E."/>
            <person name="de Daruvar A."/>
            <person name="Dehoux P."/>
            <person name="Domann E."/>
            <person name="Dominguez-Bernal G."/>
            <person name="Duchaud E."/>
            <person name="Durant L."/>
            <person name="Dussurget O."/>
            <person name="Entian K.-D."/>
            <person name="Fsihi H."/>
            <person name="Garcia-del Portillo F."/>
            <person name="Garrido P."/>
            <person name="Gautier L."/>
            <person name="Goebel W."/>
            <person name="Gomez-Lopez N."/>
            <person name="Hain T."/>
            <person name="Hauf J."/>
            <person name="Jackson D."/>
            <person name="Jones L.-M."/>
            <person name="Kaerst U."/>
            <person name="Kreft J."/>
            <person name="Kuhn M."/>
            <person name="Kunst F."/>
            <person name="Kurapkat G."/>
            <person name="Madueno E."/>
            <person name="Maitournam A."/>
            <person name="Mata Vicente J."/>
            <person name="Ng E."/>
            <person name="Nedjari H."/>
            <person name="Nordsiek G."/>
            <person name="Novella S."/>
            <person name="de Pablos B."/>
            <person name="Perez-Diaz J.-C."/>
            <person name="Purcell R."/>
            <person name="Remmel B."/>
            <person name="Rose M."/>
            <person name="Schlueter T."/>
            <person name="Simoes N."/>
            <person name="Tierrez A."/>
            <person name="Vazquez-Boland J.-A."/>
            <person name="Voss H."/>
            <person name="Wehland J."/>
            <person name="Cossart P."/>
        </authorList>
    </citation>
    <scope>NUCLEOTIDE SEQUENCE [LARGE SCALE GENOMIC DNA]</scope>
    <source>
        <strain>ATCC BAA-680 / CLIP 11262</strain>
    </source>
</reference>
<dbReference type="EC" id="3.4.25.2" evidence="1"/>
<dbReference type="EMBL" id="AL596168">
    <property type="protein sequence ID" value="CAC96548.1"/>
    <property type="molecule type" value="Genomic_DNA"/>
</dbReference>
<dbReference type="PIR" id="AD1597">
    <property type="entry name" value="AD1597"/>
</dbReference>
<dbReference type="RefSeq" id="WP_003761964.1">
    <property type="nucleotide sequence ID" value="NC_003212.1"/>
</dbReference>
<dbReference type="SMR" id="Q92C74"/>
<dbReference type="STRING" id="272626.gene:17565648"/>
<dbReference type="MEROPS" id="T01.007"/>
<dbReference type="GeneID" id="93234697"/>
<dbReference type="KEGG" id="lin:clpQ"/>
<dbReference type="eggNOG" id="COG5405">
    <property type="taxonomic scope" value="Bacteria"/>
</dbReference>
<dbReference type="HOGENOM" id="CLU_093872_1_1_9"/>
<dbReference type="OrthoDB" id="9804884at2"/>
<dbReference type="Proteomes" id="UP000002513">
    <property type="component" value="Chromosome"/>
</dbReference>
<dbReference type="GO" id="GO:0009376">
    <property type="term" value="C:HslUV protease complex"/>
    <property type="evidence" value="ECO:0007669"/>
    <property type="project" value="UniProtKB-UniRule"/>
</dbReference>
<dbReference type="GO" id="GO:0005839">
    <property type="term" value="C:proteasome core complex"/>
    <property type="evidence" value="ECO:0007669"/>
    <property type="project" value="InterPro"/>
</dbReference>
<dbReference type="GO" id="GO:0046872">
    <property type="term" value="F:metal ion binding"/>
    <property type="evidence" value="ECO:0007669"/>
    <property type="project" value="UniProtKB-KW"/>
</dbReference>
<dbReference type="GO" id="GO:0004298">
    <property type="term" value="F:threonine-type endopeptidase activity"/>
    <property type="evidence" value="ECO:0007669"/>
    <property type="project" value="UniProtKB-KW"/>
</dbReference>
<dbReference type="GO" id="GO:0051603">
    <property type="term" value="P:proteolysis involved in protein catabolic process"/>
    <property type="evidence" value="ECO:0007669"/>
    <property type="project" value="InterPro"/>
</dbReference>
<dbReference type="CDD" id="cd01913">
    <property type="entry name" value="protease_HslV"/>
    <property type="match status" value="1"/>
</dbReference>
<dbReference type="FunFam" id="3.60.20.10:FF:000002">
    <property type="entry name" value="ATP-dependent protease subunit HslV"/>
    <property type="match status" value="1"/>
</dbReference>
<dbReference type="Gene3D" id="3.60.20.10">
    <property type="entry name" value="Glutamine Phosphoribosylpyrophosphate, subunit 1, domain 1"/>
    <property type="match status" value="1"/>
</dbReference>
<dbReference type="HAMAP" id="MF_00248">
    <property type="entry name" value="HslV"/>
    <property type="match status" value="1"/>
</dbReference>
<dbReference type="InterPro" id="IPR022281">
    <property type="entry name" value="ATP-dep_Prtase_HsIV_su"/>
</dbReference>
<dbReference type="InterPro" id="IPR029055">
    <property type="entry name" value="Ntn_hydrolases_N"/>
</dbReference>
<dbReference type="InterPro" id="IPR001353">
    <property type="entry name" value="Proteasome_sua/b"/>
</dbReference>
<dbReference type="InterPro" id="IPR023333">
    <property type="entry name" value="Proteasome_suB-type"/>
</dbReference>
<dbReference type="NCBIfam" id="TIGR03692">
    <property type="entry name" value="ATP_dep_HslV"/>
    <property type="match status" value="1"/>
</dbReference>
<dbReference type="NCBIfam" id="NF003964">
    <property type="entry name" value="PRK05456.1"/>
    <property type="match status" value="1"/>
</dbReference>
<dbReference type="PANTHER" id="PTHR32194:SF0">
    <property type="entry name" value="ATP-DEPENDENT PROTEASE SUBUNIT HSLV"/>
    <property type="match status" value="1"/>
</dbReference>
<dbReference type="PANTHER" id="PTHR32194">
    <property type="entry name" value="METALLOPROTEASE TLDD"/>
    <property type="match status" value="1"/>
</dbReference>
<dbReference type="Pfam" id="PF00227">
    <property type="entry name" value="Proteasome"/>
    <property type="match status" value="1"/>
</dbReference>
<dbReference type="PIRSF" id="PIRSF039093">
    <property type="entry name" value="HslV"/>
    <property type="match status" value="1"/>
</dbReference>
<dbReference type="SUPFAM" id="SSF56235">
    <property type="entry name" value="N-terminal nucleophile aminohydrolases (Ntn hydrolases)"/>
    <property type="match status" value="1"/>
</dbReference>
<dbReference type="PROSITE" id="PS51476">
    <property type="entry name" value="PROTEASOME_BETA_2"/>
    <property type="match status" value="1"/>
</dbReference>
<protein>
    <recommendedName>
        <fullName evidence="1">ATP-dependent protease subunit HslV</fullName>
        <ecNumber evidence="1">3.4.25.2</ecNumber>
    </recommendedName>
</protein>
<accession>Q92C74</accession>